<sequence>MDAAAEMQKVVSLRRGGGGSSSRGAASMWWSADNGVFSRSRASSSGEDGEDDEEALRWAALEKLPTYDRVRRAVLPVVEEGGGGGEAGKKVVDVLSLGPQERRALLERLVRVAEDDNERFLLKLKERIDRVGIDIPTIEVRFEHLEAEAEVRVGNSGLPTVLNSMTNKLEGAANALGILPNKKQTMPILHDVSGIVKPRRMTLLLGPPGSGKTTLLLALAGRLGKDIKFSGQVTYNGHQMEDFVPQRTAAYISQHDLHIGEMTVRETLSFSARCQGVGSRFDMLTELSRREKAANIKPDADIDAFMKASAMEGQETNLITDYILKILGLDICADTMVGDDMVRGISGGQRKRVTTGEMLVGPANALFMDEISTGLDSSTTFQIVKSLRQAIHILGGTAVISLLQPAPETYDLFDDIILLSDGQIVYQGPREGVLEFFELMGFKCPERKGVADFLQEVTSRKDQKQYWMQHDKPYRYVPVKDFASAFQSFHTGKSIANELATPFDKSKNHPAALTTSRYGVSAMELLKANIDREFLLMKRNSFVYIFRACQLMVVSAIAMTVFFRTKMHRDSVTDGVIFMGALFFSVMMIMFNGLSELPLTIFKLPVFFKQRDLLFFPAWTYTIPSWILKIPMSFIEVGGFVFMSYYVIGFDPSAGRFFKQYLLMLAINQMAAALFRFVGGAARNMIVANVFGSFMLLIFMVLGGFILVREKVKKWWIWGYWISPMMYAQNAISVNEFLGHSWDKVLNNSLSNETLGVQALRSRGVFPEAKWYWIGFGALLGFIMLFNGLFTLALTYLKPYGKSQPSVSEEELKEKQANINGNVLDVDTMASSTNLAIVDNTETSSEIADNSQPTQRGMVLPFAPLSLTFDNIKYSVDMPQEMKAHGIVEDRLELLKGVSGSFRPGVLTALMGVSGAGKTTLMDVLAGRKTGGYIEGNITISGYPKKQETFARVSGYCEQNDIHSPQVTVSESLLFSAWLRLPKDVDSNTRKMFIEEVMELVELKPLRDALVGLPGVNGLSTEQRKRLTIAVELVANPSIIFMDEPTSGLDARAAAIVMRTVRNTVDTGRTVVCTIHQPSIDIFEAFDELFLMKRGGEEIYVGPLGHQSSELIKYFEGIKGVSRIKDGYNPATWMLEVSTISQEQALGVDFCDIYRKSELFQRNKALIQELSTPPPGSSELYFPTKYSLSFLNQCLACLWKMHLSYWRNPPYNAIRLFFTTVIALLFGTIFWDLGGKTGKSQDLFNAMGSMYSAVLFIGVLNSQSVQPVVSVERTVFYRERAAGMYSAFPYAFGQVAIEFPYTLVQSIIYGIIVYSMIGFKWTAAKFFWYLFFMFFTFLYFTFYGMMAVGLTPSYHVASIVSSAFYGIWNLFSGFIIPRPKVPIWWRWYCWICPVAWTLYGLVASQFGDIMTPMDDGTPVKIFVENYFDFKHSWLGVVAVVIVAFTMLFAFLFGFAIMKLNFQKR</sequence>
<name>AB35G_ORYSJ</name>
<reference key="1">
    <citation type="journal article" date="2003" name="Plant Physiol.">
        <title>The ATP-binding cassette transporters: structure, function, and gene family comparison between rice and Arabidopsis.</title>
        <authorList>
            <person name="Jasinski M."/>
            <person name="Ducos E."/>
            <person name="Martinoia E."/>
            <person name="Boutry M."/>
        </authorList>
    </citation>
    <scope>NUCLEOTIDE SEQUENCE [GENOMIC DNA]</scope>
</reference>
<reference key="2">
    <citation type="journal article" date="2002" name="Nature">
        <title>The genome sequence and structure of rice chromosome 1.</title>
        <authorList>
            <person name="Sasaki T."/>
            <person name="Matsumoto T."/>
            <person name="Yamamoto K."/>
            <person name="Sakata K."/>
            <person name="Baba T."/>
            <person name="Katayose Y."/>
            <person name="Wu J."/>
            <person name="Niimura Y."/>
            <person name="Cheng Z."/>
            <person name="Nagamura Y."/>
            <person name="Antonio B.A."/>
            <person name="Kanamori H."/>
            <person name="Hosokawa S."/>
            <person name="Masukawa M."/>
            <person name="Arikawa K."/>
            <person name="Chiden Y."/>
            <person name="Hayashi M."/>
            <person name="Okamoto M."/>
            <person name="Ando T."/>
            <person name="Aoki H."/>
            <person name="Arita K."/>
            <person name="Hamada M."/>
            <person name="Harada C."/>
            <person name="Hijishita S."/>
            <person name="Honda M."/>
            <person name="Ichikawa Y."/>
            <person name="Idonuma A."/>
            <person name="Iijima M."/>
            <person name="Ikeda M."/>
            <person name="Ikeno M."/>
            <person name="Ito S."/>
            <person name="Ito T."/>
            <person name="Ito Y."/>
            <person name="Ito Y."/>
            <person name="Iwabuchi A."/>
            <person name="Kamiya K."/>
            <person name="Karasawa W."/>
            <person name="Katagiri S."/>
            <person name="Kikuta A."/>
            <person name="Kobayashi N."/>
            <person name="Kono I."/>
            <person name="Machita K."/>
            <person name="Maehara T."/>
            <person name="Mizuno H."/>
            <person name="Mizubayashi T."/>
            <person name="Mukai Y."/>
            <person name="Nagasaki H."/>
            <person name="Nakashima M."/>
            <person name="Nakama Y."/>
            <person name="Nakamichi Y."/>
            <person name="Nakamura M."/>
            <person name="Namiki N."/>
            <person name="Negishi M."/>
            <person name="Ohta I."/>
            <person name="Ono N."/>
            <person name="Saji S."/>
            <person name="Sakai K."/>
            <person name="Shibata M."/>
            <person name="Shimokawa T."/>
            <person name="Shomura A."/>
            <person name="Song J."/>
            <person name="Takazaki Y."/>
            <person name="Terasawa K."/>
            <person name="Tsuji K."/>
            <person name="Waki K."/>
            <person name="Yamagata H."/>
            <person name="Yamane H."/>
            <person name="Yoshiki S."/>
            <person name="Yoshihara R."/>
            <person name="Yukawa K."/>
            <person name="Zhong H."/>
            <person name="Iwama H."/>
            <person name="Endo T."/>
            <person name="Ito H."/>
            <person name="Hahn J.H."/>
            <person name="Kim H.-I."/>
            <person name="Eun M.-Y."/>
            <person name="Yano M."/>
            <person name="Jiang J."/>
            <person name="Gojobori T."/>
        </authorList>
    </citation>
    <scope>NUCLEOTIDE SEQUENCE [LARGE SCALE GENOMIC DNA]</scope>
    <source>
        <strain>cv. Nipponbare</strain>
    </source>
</reference>
<reference key="3">
    <citation type="journal article" date="2005" name="Nature">
        <title>The map-based sequence of the rice genome.</title>
        <authorList>
            <consortium name="International rice genome sequencing project (IRGSP)"/>
        </authorList>
    </citation>
    <scope>NUCLEOTIDE SEQUENCE [LARGE SCALE GENOMIC DNA]</scope>
    <source>
        <strain>cv. Nipponbare</strain>
    </source>
</reference>
<reference key="4">
    <citation type="journal article" date="2008" name="Nucleic Acids Res.">
        <title>The rice annotation project database (RAP-DB): 2008 update.</title>
        <authorList>
            <consortium name="The rice annotation project (RAP)"/>
        </authorList>
    </citation>
    <scope>GENOME REANNOTATION</scope>
    <source>
        <strain>cv. Nipponbare</strain>
    </source>
</reference>
<reference key="5">
    <citation type="journal article" date="2013" name="Rice">
        <title>Improvement of the Oryza sativa Nipponbare reference genome using next generation sequence and optical map data.</title>
        <authorList>
            <person name="Kawahara Y."/>
            <person name="de la Bastide M."/>
            <person name="Hamilton J.P."/>
            <person name="Kanamori H."/>
            <person name="McCombie W.R."/>
            <person name="Ouyang S."/>
            <person name="Schwartz D.C."/>
            <person name="Tanaka T."/>
            <person name="Wu J."/>
            <person name="Zhou S."/>
            <person name="Childs K.L."/>
            <person name="Davidson R.M."/>
            <person name="Lin H."/>
            <person name="Quesada-Ocampo L."/>
            <person name="Vaillancourt B."/>
            <person name="Sakai H."/>
            <person name="Lee S.S."/>
            <person name="Kim J."/>
            <person name="Numa H."/>
            <person name="Itoh T."/>
            <person name="Buell C.R."/>
            <person name="Matsumoto T."/>
        </authorList>
    </citation>
    <scope>GENOME REANNOTATION</scope>
    <source>
        <strain>cv. Nipponbare</strain>
    </source>
</reference>
<reference key="6">
    <citation type="journal article" date="2002" name="Planta">
        <title>The plant PDR family of ABC transporters.</title>
        <authorList>
            <person name="van den Brule S."/>
            <person name="Smart C.C."/>
        </authorList>
    </citation>
    <scope>IDENTIFICATION</scope>
</reference>
<reference key="7">
    <citation type="journal article" date="2006" name="FEBS Lett.">
        <title>Organization and function of the plant pleiotropic drug resistance ABC transporter family.</title>
        <authorList>
            <person name="Crouzet J."/>
            <person name="Trombik T."/>
            <person name="Fraysse A.S."/>
            <person name="Boutry M."/>
        </authorList>
    </citation>
    <scope>GENE FAMILY</scope>
    <scope>NOMENCLATURE</scope>
</reference>
<reference key="8">
    <citation type="journal article" date="2008" name="Trends Plant Sci.">
        <title>Plant ABC proteins - a unified nomenclature and updated inventory.</title>
        <authorList>
            <person name="Verrier P.J."/>
            <person name="Bird D."/>
            <person name="Burla B."/>
            <person name="Dassa E."/>
            <person name="Forestier C."/>
            <person name="Geisler M."/>
            <person name="Klein M."/>
            <person name="Kolukisaoglu H.U."/>
            <person name="Lee Y."/>
            <person name="Martinoia E."/>
            <person name="Murphy A."/>
            <person name="Rea P.A."/>
            <person name="Samuels L."/>
            <person name="Schulz B."/>
            <person name="Spalding E.J."/>
            <person name="Yazaki K."/>
            <person name="Theodoulou F.L."/>
        </authorList>
    </citation>
    <scope>GENE FAMILY</scope>
    <scope>NOMENCLATURE</scope>
</reference>
<protein>
    <recommendedName>
        <fullName evidence="8">ABC transporter G family member 35</fullName>
        <shortName evidence="8">OsABCG35</shortName>
    </recommendedName>
    <alternativeName>
        <fullName evidence="6 7">Pleiotropic drug resistance protein 11</fullName>
        <shortName evidence="7">OsPDR11</shortName>
    </alternativeName>
</protein>
<organism>
    <name type="scientific">Oryza sativa subsp. japonica</name>
    <name type="common">Rice</name>
    <dbReference type="NCBI Taxonomy" id="39947"/>
    <lineage>
        <taxon>Eukaryota</taxon>
        <taxon>Viridiplantae</taxon>
        <taxon>Streptophyta</taxon>
        <taxon>Embryophyta</taxon>
        <taxon>Tracheophyta</taxon>
        <taxon>Spermatophyta</taxon>
        <taxon>Magnoliopsida</taxon>
        <taxon>Liliopsida</taxon>
        <taxon>Poales</taxon>
        <taxon>Poaceae</taxon>
        <taxon>BOP clade</taxon>
        <taxon>Oryzoideae</taxon>
        <taxon>Oryzeae</taxon>
        <taxon>Oryzinae</taxon>
        <taxon>Oryza</taxon>
        <taxon>Oryza sativa</taxon>
    </lineage>
</organism>
<proteinExistence type="inferred from homology"/>
<dbReference type="EMBL" id="AJ535044">
    <property type="protein sequence ID" value="CAD59566.1"/>
    <property type="molecule type" value="Genomic_DNA"/>
</dbReference>
<dbReference type="EMBL" id="AP002844">
    <property type="status" value="NOT_ANNOTATED_CDS"/>
    <property type="molecule type" value="Genomic_DNA"/>
</dbReference>
<dbReference type="EMBL" id="AP008207">
    <property type="protein sequence ID" value="BAF05452.1"/>
    <property type="status" value="ALT_SEQ"/>
    <property type="molecule type" value="Genomic_DNA"/>
</dbReference>
<dbReference type="EMBL" id="AP014957">
    <property type="protein sequence ID" value="BAS73100.1"/>
    <property type="molecule type" value="Genomic_DNA"/>
</dbReference>
<dbReference type="EMBL" id="BK001016">
    <property type="protein sequence ID" value="DAA00885.1"/>
    <property type="molecule type" value="Genomic_DNA"/>
</dbReference>
<dbReference type="RefSeq" id="XP_015638596.1">
    <property type="nucleotide sequence ID" value="XM_015783110.1"/>
</dbReference>
<dbReference type="SMR" id="Q8GU92"/>
<dbReference type="FunCoup" id="Q8GU92">
    <property type="interactions" value="111"/>
</dbReference>
<dbReference type="STRING" id="39947.Q8GU92"/>
<dbReference type="PaxDb" id="39947-Q8GU92"/>
<dbReference type="EnsemblPlants" id="Os01t0609200-00">
    <property type="protein sequence ID" value="Os01t0609200-00"/>
    <property type="gene ID" value="Os01g0609200"/>
</dbReference>
<dbReference type="Gramene" id="Os01t0609200-00">
    <property type="protein sequence ID" value="Os01t0609200-00"/>
    <property type="gene ID" value="Os01g0609200"/>
</dbReference>
<dbReference type="KEGG" id="dosa:Os01g0609200"/>
<dbReference type="eggNOG" id="KOG0065">
    <property type="taxonomic scope" value="Eukaryota"/>
</dbReference>
<dbReference type="HOGENOM" id="CLU_000604_35_6_1"/>
<dbReference type="InParanoid" id="Q8GU92"/>
<dbReference type="OMA" id="PEVEICF"/>
<dbReference type="OrthoDB" id="66620at2759"/>
<dbReference type="Proteomes" id="UP000000763">
    <property type="component" value="Chromosome 1"/>
</dbReference>
<dbReference type="Proteomes" id="UP000059680">
    <property type="component" value="Chromosome 1"/>
</dbReference>
<dbReference type="GO" id="GO:0016020">
    <property type="term" value="C:membrane"/>
    <property type="evidence" value="ECO:0007669"/>
    <property type="project" value="UniProtKB-SubCell"/>
</dbReference>
<dbReference type="GO" id="GO:0140359">
    <property type="term" value="F:ABC-type transporter activity"/>
    <property type="evidence" value="ECO:0007669"/>
    <property type="project" value="InterPro"/>
</dbReference>
<dbReference type="GO" id="GO:0005524">
    <property type="term" value="F:ATP binding"/>
    <property type="evidence" value="ECO:0007669"/>
    <property type="project" value="UniProtKB-KW"/>
</dbReference>
<dbReference type="GO" id="GO:0016887">
    <property type="term" value="F:ATP hydrolysis activity"/>
    <property type="evidence" value="ECO:0007669"/>
    <property type="project" value="InterPro"/>
</dbReference>
<dbReference type="CDD" id="cd03233">
    <property type="entry name" value="ABCG_PDR_domain1"/>
    <property type="match status" value="1"/>
</dbReference>
<dbReference type="CDD" id="cd03232">
    <property type="entry name" value="ABCG_PDR_domain2"/>
    <property type="match status" value="1"/>
</dbReference>
<dbReference type="FunFam" id="3.40.50.300:FF:000179">
    <property type="entry name" value="ABC transporter G family member 34"/>
    <property type="match status" value="1"/>
</dbReference>
<dbReference type="FunFam" id="3.40.50.300:FF:000059">
    <property type="entry name" value="ABC transporter G family member 40"/>
    <property type="match status" value="1"/>
</dbReference>
<dbReference type="Gene3D" id="3.40.50.300">
    <property type="entry name" value="P-loop containing nucleotide triphosphate hydrolases"/>
    <property type="match status" value="2"/>
</dbReference>
<dbReference type="InterPro" id="IPR003593">
    <property type="entry name" value="AAA+_ATPase"/>
</dbReference>
<dbReference type="InterPro" id="IPR013525">
    <property type="entry name" value="ABC2_TM"/>
</dbReference>
<dbReference type="InterPro" id="IPR029481">
    <property type="entry name" value="ABC_trans_N"/>
</dbReference>
<dbReference type="InterPro" id="IPR003439">
    <property type="entry name" value="ABC_transporter-like_ATP-bd"/>
</dbReference>
<dbReference type="InterPro" id="IPR043926">
    <property type="entry name" value="ABCG_dom"/>
</dbReference>
<dbReference type="InterPro" id="IPR034001">
    <property type="entry name" value="ABCG_PDR_1"/>
</dbReference>
<dbReference type="InterPro" id="IPR034003">
    <property type="entry name" value="ABCG_PDR_2"/>
</dbReference>
<dbReference type="InterPro" id="IPR027417">
    <property type="entry name" value="P-loop_NTPase"/>
</dbReference>
<dbReference type="InterPro" id="IPR013581">
    <property type="entry name" value="PDR_assoc"/>
</dbReference>
<dbReference type="PANTHER" id="PTHR48040:SF35">
    <property type="entry name" value="ABC TRANSPORTER G FAMILY MEMBER 39-LIKE"/>
    <property type="match status" value="1"/>
</dbReference>
<dbReference type="PANTHER" id="PTHR48040">
    <property type="entry name" value="PLEIOTROPIC DRUG RESISTANCE PROTEIN 1-LIKE ISOFORM X1"/>
    <property type="match status" value="1"/>
</dbReference>
<dbReference type="Pfam" id="PF01061">
    <property type="entry name" value="ABC2_membrane"/>
    <property type="match status" value="2"/>
</dbReference>
<dbReference type="Pfam" id="PF19055">
    <property type="entry name" value="ABC2_membrane_7"/>
    <property type="match status" value="1"/>
</dbReference>
<dbReference type="Pfam" id="PF00005">
    <property type="entry name" value="ABC_tran"/>
    <property type="match status" value="2"/>
</dbReference>
<dbReference type="Pfam" id="PF14510">
    <property type="entry name" value="ABC_trans_N"/>
    <property type="match status" value="1"/>
</dbReference>
<dbReference type="Pfam" id="PF08370">
    <property type="entry name" value="PDR_assoc"/>
    <property type="match status" value="1"/>
</dbReference>
<dbReference type="SMART" id="SM00382">
    <property type="entry name" value="AAA"/>
    <property type="match status" value="2"/>
</dbReference>
<dbReference type="SUPFAM" id="SSF52540">
    <property type="entry name" value="P-loop containing nucleoside triphosphate hydrolases"/>
    <property type="match status" value="2"/>
</dbReference>
<dbReference type="PROSITE" id="PS50893">
    <property type="entry name" value="ABC_TRANSPORTER_2"/>
    <property type="match status" value="2"/>
</dbReference>
<gene>
    <name evidence="8" type="primary">ABCG35</name>
    <name evidence="6" type="synonym">PDR11</name>
    <name evidence="5 7" type="synonym">PDR2</name>
    <name evidence="11" type="ordered locus">Os01g0609200</name>
    <name type="ordered locus">LOC_Os01g42370</name>
    <name evidence="10" type="ORF">P0410E03.6</name>
</gene>
<comment type="function">
    <text evidence="1">May be a general defense protein.</text>
</comment>
<comment type="subcellular location">
    <subcellularLocation>
        <location evidence="2">Membrane</location>
        <topology evidence="2">Multi-pass membrane protein</topology>
    </subcellularLocation>
</comment>
<comment type="similarity">
    <text evidence="9">Belongs to the ABC transporter superfamily. ABCG family. PDR (TC 3.A.1.205) subfamily.</text>
</comment>
<comment type="sequence caution" evidence="9">
    <conflict type="erroneous gene model prediction">
        <sequence resource="EMBL-CDS" id="BAF05452"/>
    </conflict>
</comment>
<accession>Q8GU92</accession>
<accession>A0A0P0V536</accession>
<accession>Q0JLC6</accession>
<keyword id="KW-0067">ATP-binding</keyword>
<keyword id="KW-0472">Membrane</keyword>
<keyword id="KW-0547">Nucleotide-binding</keyword>
<keyword id="KW-1185">Reference proteome</keyword>
<keyword id="KW-0677">Repeat</keyword>
<keyword id="KW-0812">Transmembrane</keyword>
<keyword id="KW-1133">Transmembrane helix</keyword>
<keyword id="KW-0813">Transport</keyword>
<evidence type="ECO:0000250" key="1"/>
<evidence type="ECO:0000255" key="2"/>
<evidence type="ECO:0000255" key="3">
    <source>
        <dbReference type="PROSITE-ProRule" id="PRU00434"/>
    </source>
</evidence>
<evidence type="ECO:0000256" key="4">
    <source>
        <dbReference type="SAM" id="MobiDB-lite"/>
    </source>
</evidence>
<evidence type="ECO:0000303" key="5">
    <source>
    </source>
</evidence>
<evidence type="ECO:0000303" key="6">
    <source>
    </source>
</evidence>
<evidence type="ECO:0000303" key="7">
    <source>
    </source>
</evidence>
<evidence type="ECO:0000303" key="8">
    <source>
    </source>
</evidence>
<evidence type="ECO:0000305" key="9"/>
<evidence type="ECO:0000312" key="10">
    <source>
        <dbReference type="EMBL" id="AP002844"/>
    </source>
</evidence>
<evidence type="ECO:0000312" key="11">
    <source>
        <dbReference type="EMBL" id="BAF05452.1"/>
    </source>
</evidence>
<feature type="chain" id="PRO_0000234644" description="ABC transporter G family member 35">
    <location>
        <begin position="1"/>
        <end position="1464"/>
    </location>
</feature>
<feature type="transmembrane region" description="Helical" evidence="2">
    <location>
        <begin position="542"/>
        <end position="562"/>
    </location>
</feature>
<feature type="transmembrane region" description="Helical" evidence="2">
    <location>
        <begin position="575"/>
        <end position="595"/>
    </location>
</feature>
<feature type="transmembrane region" description="Helical" evidence="2">
    <location>
        <begin position="630"/>
        <end position="650"/>
    </location>
</feature>
<feature type="transmembrane region" description="Helical" evidence="2">
    <location>
        <begin position="662"/>
        <end position="682"/>
    </location>
</feature>
<feature type="transmembrane region" description="Helical" evidence="2">
    <location>
        <begin position="686"/>
        <end position="706"/>
    </location>
</feature>
<feature type="transmembrane region" description="Helical" evidence="2">
    <location>
        <begin position="715"/>
        <end position="735"/>
    </location>
</feature>
<feature type="transmembrane region" description="Helical" evidence="2">
    <location>
        <begin position="774"/>
        <end position="794"/>
    </location>
</feature>
<feature type="transmembrane region" description="Helical" evidence="2">
    <location>
        <begin position="1213"/>
        <end position="1233"/>
    </location>
</feature>
<feature type="transmembrane region" description="Helical" evidence="2">
    <location>
        <begin position="1243"/>
        <end position="1263"/>
    </location>
</feature>
<feature type="transmembrane region" description="Helical" evidence="2">
    <location>
        <begin position="1299"/>
        <end position="1319"/>
    </location>
</feature>
<feature type="transmembrane region" description="Helical" evidence="2">
    <location>
        <begin position="1326"/>
        <end position="1346"/>
    </location>
</feature>
<feature type="transmembrane region" description="Helical" evidence="2">
    <location>
        <begin position="1356"/>
        <end position="1376"/>
    </location>
</feature>
<feature type="transmembrane region" description="Helical" evidence="2">
    <location>
        <begin position="1387"/>
        <end position="1407"/>
    </location>
</feature>
<feature type="transmembrane region" description="Helical" evidence="2">
    <location>
        <begin position="1436"/>
        <end position="1456"/>
    </location>
</feature>
<feature type="domain" description="ABC transporter 1" evidence="3">
    <location>
        <begin position="173"/>
        <end position="446"/>
    </location>
</feature>
<feature type="domain" description="ABC transmembrane type-2 1">
    <location>
        <begin position="524"/>
        <end position="737"/>
    </location>
</feature>
<feature type="domain" description="ABC transporter 2" evidence="3">
    <location>
        <begin position="867"/>
        <end position="1119"/>
    </location>
</feature>
<feature type="domain" description="ABC transmembrane type-2 2">
    <location>
        <begin position="1192"/>
        <end position="1406"/>
    </location>
</feature>
<feature type="region of interest" description="Disordered" evidence="4">
    <location>
        <begin position="1"/>
        <end position="26"/>
    </location>
</feature>
<feature type="binding site" evidence="3">
    <location>
        <begin position="206"/>
        <end position="213"/>
    </location>
    <ligand>
        <name>ATP</name>
        <dbReference type="ChEBI" id="CHEBI:30616"/>
        <label>1</label>
    </ligand>
</feature>
<feature type="binding site" evidence="3">
    <location>
        <begin position="912"/>
        <end position="919"/>
    </location>
    <ligand>
        <name>ATP</name>
        <dbReference type="ChEBI" id="CHEBI:30616"/>
        <label>2</label>
    </ligand>
</feature>